<comment type="function">
    <text evidence="10 15">Acts as a negative regulator of the proliferation of normal cells by interacting strongly with CDK4 and CDK6. This inhibits their ability to interact with cyclins D and to phosphorylate the retinoblastoma protein.</text>
</comment>
<comment type="subunit">
    <text evidence="10 11">Heterodimer with CDK4 or CDK6. Predominant p16 complexes contained CDK6. Interacts with CDK4 (both 'T-172'-phosphorylated and non-phosphorylated forms); the interaction inhibits cyclin D-CDK4 kinase activity. Interacts with ISCO2.</text>
</comment>
<comment type="interaction">
    <interactant intactId="EBI-375053">
        <id>P42771</id>
    </interactant>
    <interactant intactId="EBI-295644">
        <id>P11802</id>
        <label>CDK4</label>
    </interactant>
    <organismsDiffer>false</organismsDiffer>
    <experiments>18</experiments>
</comment>
<comment type="interaction">
    <interactant intactId="EBI-375053">
        <id>P42771</id>
    </interactant>
    <interactant intactId="EBI-295663">
        <id>Q00534</id>
        <label>CDK6</label>
    </interactant>
    <organismsDiffer>false</organismsDiffer>
    <experiments>19</experiments>
</comment>
<comment type="interaction">
    <interactant intactId="EBI-375053">
        <id>P42771</id>
    </interactant>
    <interactant intactId="EBI-3935314">
        <id>Q6UXH1</id>
        <label>CRELD2</label>
    </interactant>
    <organismsDiffer>false</organismsDiffer>
    <experiments>2</experiments>
</comment>
<comment type="interaction">
    <interactant intactId="EBI-375053">
        <id>P42771</id>
    </interactant>
    <interactant intactId="EBI-718185">
        <id>O75398</id>
        <label>DEAF1</label>
    </interactant>
    <organismsDiffer>false</organismsDiffer>
    <experiments>2</experiments>
</comment>
<comment type="interaction">
    <interactant intactId="EBI-375053">
        <id>P42771</id>
    </interactant>
    <interactant intactId="EBI-371669">
        <id>O75496</id>
        <label>GMNN</label>
    </interactant>
    <organismsDiffer>false</organismsDiffer>
    <experiments>2</experiments>
</comment>
<comment type="interaction">
    <interactant intactId="EBI-375053">
        <id>P42771</id>
    </interactant>
    <interactant intactId="EBI-351126">
        <id>Q00839</id>
        <label>HNRNPU</label>
    </interactant>
    <organismsDiffer>false</organismsDiffer>
    <experiments>2</experiments>
</comment>
<comment type="interaction">
    <interactant intactId="EBI-375053">
        <id>P42771</id>
    </interactant>
    <interactant intactId="EBI-374900">
        <id>Q14566</id>
        <label>MCM6</label>
    </interactant>
    <organismsDiffer>false</organismsDiffer>
    <experiments>4</experiments>
</comment>
<comment type="interaction">
    <interactant intactId="EBI-375053">
        <id>P42771</id>
    </interactant>
    <interactant intactId="EBI-358311">
        <id>P12004</id>
        <label>PCNA</label>
    </interactant>
    <organismsDiffer>false</organismsDiffer>
    <experiments>8</experiments>
</comment>
<comment type="interaction">
    <interactant intactId="EBI-375053">
        <id>P42771</id>
    </interactant>
    <interactant intactId="EBI-624505">
        <id>Q8NHU6</id>
        <label>TDRD7</label>
    </interactant>
    <organismsDiffer>false</organismsDiffer>
    <experiments>2</experiments>
</comment>
<comment type="subcellular location">
    <subcellularLocation>
        <location evidence="11">Cytoplasm</location>
    </subcellularLocation>
    <subcellularLocation>
        <location evidence="11">Nucleus</location>
    </subcellularLocation>
</comment>
<comment type="alternative products">
    <event type="alternative splicing"/>
    <isoform>
        <id>P42771-1</id>
        <name>1</name>
        <name>p16INK4a</name>
        <sequence type="displayed"/>
    </isoform>
    <isoform>
        <id>P42771-2</id>
        <name>2</name>
        <sequence type="described" ref="VSP_015864"/>
    </isoform>
    <isoform>
        <id>P42771-3</id>
        <name>3</name>
        <name>p12</name>
        <sequence type="described" ref="VSP_015865 VSP_015866"/>
    </isoform>
    <isoform>
        <id>Q8N726-1</id>
        <name>tumor suppressor ARF</name>
        <name>p14ARF</name>
        <name>p19ARF</name>
        <sequence type="external"/>
    </isoform>
    <isoform>
        <id>P42771-4</id>
        <name>5</name>
        <name>p16gamma</name>
        <sequence type="described" ref="VSP_043577"/>
    </isoform>
    <isoform>
        <id>Q8N726-2</id>
        <name>smARF</name>
        <sequence type="external"/>
    </isoform>
    <text>Isoform 1 and isoform tumor suppressor ARF arise due to the use of two alternative first exons joined to a common exon 2 at the same acceptor site but in different reading frames, resulting in two completely different isoforms.</text>
</comment>
<comment type="tissue specificity">
    <text evidence="1">Widely expressed but not detected in brain or skeletal muscle. Isoform 3 is pancreas-specific.</text>
</comment>
<comment type="PTM">
    <text evidence="8">Phosphorylation seems to increase interaction with CDK4.</text>
</comment>
<comment type="disease">
    <text>The association between cutaneous and uveal melanomas in some families suggests that mutations in CDKN2A may account for a proportion of uveal melanomas. However, CDKN2A mutations are rarely found in uveal melanoma patients.</text>
</comment>
<comment type="disease" evidence="3 4 6 7 9 12 16 18 19 20 21 22">
    <disease id="DI-01459">
        <name>Melanoma, cutaneous malignant 2</name>
        <acronym>CMM2</acronym>
        <description>A malignant neoplasm of melanocytes, arising de novo or from a pre-existing benign nevus, which occurs most often in the skin but may also involve other sites.</description>
        <dbReference type="MIM" id="155601"/>
    </disease>
    <text>Disease susceptibility is associated with variants affecting the gene represented in this entry.</text>
</comment>
<comment type="disease">
    <disease id="DI-01558">
        <name>Familial atypical multiple mole melanoma-pancreatic carcinoma syndrome</name>
        <acronym>FAMMMPC</acronym>
        <description>An inherited cancer predisposition syndrome characterized by an increased risk of developing malignant melanoma and/or pancreatic cancer. Mutation carriers within families may develop either or both types of cancer.</description>
        <dbReference type="MIM" id="606719"/>
    </disease>
    <text>The disease is caused by variants affecting the gene represented in this entry.</text>
</comment>
<comment type="disease" evidence="5">
    <disease id="DI-01961">
        <name>Melanoma-astrocytoma syndrome</name>
        <acronym>MASTS</acronym>
        <description>Characterized by a dual predisposition to melanoma and neural system tumors, commonly astrocytoma.</description>
        <dbReference type="MIM" id="155755"/>
    </disease>
    <text>The disease is caused by variants affecting the gene represented in this entry.</text>
</comment>
<comment type="miscellaneous">
    <molecule>Isoform 5</molecule>
    <text evidence="25">Barely detectable in non-tumor cells.</text>
</comment>
<comment type="similarity">
    <text evidence="25">Belongs to the CDKN2 cyclin-dependent kinase inhibitor family.</text>
</comment>
<comment type="caution">
    <text evidence="25">The proteins described here are encoded by the gene CDKN2A, but are completely unrelated in terms of sequence and function to tumor suppressor ARF (AC Q8N726) which is encoded by the same gene.</text>
</comment>
<comment type="sequence caution" evidence="25">
    <conflict type="erroneous initiation">
        <sequence resource="EMBL-CDS" id="AAB60645"/>
    </conflict>
</comment>
<comment type="online information" name="Wikipedia">
    <link uri="https://en.wikipedia.org/wiki/P16INK4a"/>
    <text>P16INK4a entry</text>
</comment>
<feature type="chain" id="PRO_0000144177" description="Cyclin-dependent kinase inhibitor 2A">
    <location>
        <begin position="1"/>
        <end position="156"/>
    </location>
</feature>
<feature type="repeat" description="ANK 1">
    <location>
        <begin position="11"/>
        <end position="40"/>
    </location>
</feature>
<feature type="repeat" description="ANK 2">
    <location>
        <begin position="44"/>
        <end position="72"/>
    </location>
</feature>
<feature type="repeat" description="ANK 3">
    <location>
        <begin position="77"/>
        <end position="106"/>
    </location>
</feature>
<feature type="repeat" description="ANK 4">
    <location>
        <begin position="110"/>
        <end position="139"/>
    </location>
</feature>
<feature type="modified residue" description="N-acetylmethionine" evidence="27 28">
    <location>
        <position position="1"/>
    </location>
</feature>
<feature type="modified residue" description="Phosphoserine" evidence="8">
    <location>
        <position position="7"/>
    </location>
</feature>
<feature type="modified residue" description="Phosphoserine" evidence="8">
    <location>
        <position position="8"/>
    </location>
</feature>
<feature type="modified residue" description="Phosphoserine" evidence="8">
    <location>
        <position position="140"/>
    </location>
</feature>
<feature type="modified residue" description="Phosphoserine" evidence="8">
    <location>
        <position position="152"/>
    </location>
</feature>
<feature type="splice variant" id="VSP_015864" description="In isoform 2." evidence="25">
    <location>
        <begin position="1"/>
        <end position="51"/>
    </location>
</feature>
<feature type="splice variant" id="VSP_015865" description="In isoform 3." evidence="23">
    <original>MMMGSARVAELLLLHGAEPNCADPATLTRPVHDAAREGFLDTLVVLHRAGARLDVRDAWGRLPVD</original>
    <variation>GRGSAAGAGDGGRLWRTKFAGELESGSASILRKKGRLPGEFSEGVCNHRPPPGDALGAWEAKEEE</variation>
    <location>
        <begin position="52"/>
        <end position="116"/>
    </location>
</feature>
<feature type="splice variant" id="VSP_015866" description="In isoform 3." evidence="23">
    <location>
        <begin position="117"/>
        <end position="156"/>
    </location>
</feature>
<feature type="splice variant" id="VSP_043577" description="In isoform 5." evidence="24">
    <original>DIPD</original>
    <variation>EMIGNHLWVCRSRHA</variation>
    <location>
        <begin position="153"/>
        <end position="156"/>
    </location>
</feature>
<feature type="sequence variant" id="VAR_001408" description="In a biliary tract tumor; dbSNP:rs1819961127.">
    <original>D</original>
    <variation>E</variation>
    <location>
        <position position="14"/>
    </location>
</feature>
<feature type="sequence variant" id="VAR_001409" description="In a biliary tract tumor and a familial melanoma; dbSNP:rs864622263.">
    <original>L</original>
    <variation>P</variation>
    <location>
        <position position="16"/>
    </location>
</feature>
<feature type="sequence variant" id="VAR_058549" description="In CMM2; loss of CDK4 binding.">
    <original>A</original>
    <variation>ATA</variation>
    <location>
        <position position="19"/>
    </location>
</feature>
<feature type="sequence variant" id="VAR_001410" description="In a lung tumor and melanoma; dbSNP:rs760065045.">
    <original>A</original>
    <variation>P</variation>
    <location>
        <position position="20"/>
    </location>
</feature>
<feature type="sequence variant" id="VAR_001411" description="In a biliary tract tumor; dbSNP:rs760065045.">
    <original>A</original>
    <variation>S</variation>
    <location>
        <position position="20"/>
    </location>
</feature>
<feature type="sequence variant" id="VAR_001412" description="In a pancreas tumor and a melanoma; loss of CDK4 binding; dbSNP:rs1064794292.">
    <original>G</original>
    <variation>D</variation>
    <location>
        <position position="23"/>
    </location>
</feature>
<feature type="sequence variant" id="VAR_001414" description="In CMM2; dbSNP:rs104894097." evidence="21">
    <original>R</original>
    <variation>P</variation>
    <location>
        <position position="24"/>
    </location>
</feature>
<feature type="sequence variant" id="VAR_058550" description="Found in a patient with multiple primary melanoma; partial loss of CDK4 binding; dbSNP:rs104894097." evidence="12">
    <original>R</original>
    <variation>Q</variation>
    <location>
        <position position="24"/>
    </location>
</feature>
<feature type="sequence variant" id="VAR_001415" description="In a biliary tract tumor; dbSNP:rs2131113016.">
    <original>E</original>
    <variation>D</variation>
    <location>
        <position position="26"/>
    </location>
</feature>
<feature type="sequence variant" id="VAR_001416" description="In CMM2; dbSNP:rs878853650." evidence="18">
    <original>L</original>
    <variation>P</variation>
    <location>
        <position position="32"/>
    </location>
</feature>
<feature type="sequence variant" id="VAR_001417" description="In a biliary tract tumor.">
    <original>E</original>
    <variation>D</variation>
    <location>
        <position position="33"/>
    </location>
</feature>
<feature type="sequence variant" id="VAR_001418" description="In CMM2; also found in a biliary tract tumor and a patient with uveal melanoma; partial loss of CDK4 binding; dbSNP:rs746834149." evidence="18">
    <original>G</original>
    <variation>A</variation>
    <location>
        <position position="35"/>
    </location>
</feature>
<feature type="sequence variant" id="VAR_001419" description="In CMM2; dbSNP:rs746834149." evidence="18">
    <original>G</original>
    <variation>E</variation>
    <location>
        <position position="35"/>
    </location>
</feature>
<feature type="sequence variant" id="VAR_058551" description="In CMM2; loss of CDK4 binding; dbSNP:rs746834149." evidence="12">
    <original>G</original>
    <variation>V</variation>
    <location>
        <position position="35"/>
    </location>
</feature>
<feature type="sequence variant" id="VAR_001420" description="In CMM2; also found in head and neck tumor; somatic mutation; dbSNP:rs763804037." evidence="3">
    <original>P</original>
    <variation>L</variation>
    <location>
        <position position="48"/>
    </location>
</feature>
<feature type="sequence variant" id="VAR_001421" description="In a biliary tract tumor; dbSNP:rs199907548.">
    <original>I</original>
    <variation>S</variation>
    <location>
        <position position="49"/>
    </location>
</feature>
<feature type="sequence variant" id="VAR_001422" description="In dbSNP:rs199907548." evidence="13 16">
    <original>I</original>
    <variation>T</variation>
    <location>
        <position position="49"/>
    </location>
</feature>
<feature type="sequence variant" id="VAR_001423" description="In CMM2; dbSNP:rs587778189." evidence="18">
    <original>Q</original>
    <variation>R</variation>
    <location>
        <position position="50"/>
    </location>
</feature>
<feature type="sequence variant" id="VAR_001424" description="In CMM2; dbSNP:rs104894095." evidence="18 20 21">
    <original>M</original>
    <variation>I</variation>
    <location>
        <position position="53"/>
    </location>
</feature>
<feature type="sequence variant" id="VAR_001425" description="In CMM2; dbSNP:rs104894109." evidence="22">
    <original>S</original>
    <variation>I</variation>
    <location>
        <position position="56"/>
    </location>
</feature>
<feature type="sequence variant" id="VAR_001426" description="In pancreas carcinoma; somatic mutation; partial loss of CDK4 binding; dbSNP:rs372266620." evidence="3">
    <original>A</original>
    <variation>V</variation>
    <location>
        <position position="57"/>
    </location>
</feature>
<feature type="sequence variant" id="VAR_001427" description="In CMM2; dbSNP:rs104894099." evidence="4">
    <original>V</original>
    <variation>G</variation>
    <location>
        <position position="59"/>
    </location>
</feature>
<feature type="sequence variant" id="VAR_001428" description="In dbSNP:rs769382085.">
    <original>A</original>
    <variation>T</variation>
    <location>
        <position position="60"/>
    </location>
</feature>
<feature type="sequence variant" id="VAR_053028" description="In melanoma; loss of CDK4 binding; dbSNP:rs36204594.">
    <original>A</original>
    <variation>V</variation>
    <location>
        <position position="60"/>
    </location>
</feature>
<feature type="sequence variant" id="VAR_001429">
    <original>EL</original>
    <variation>DV</variation>
    <location>
        <begin position="61"/>
        <end position="62"/>
    </location>
</feature>
<feature type="sequence variant" id="VAR_001430" description="In CMM2; dbSNP:rs2131096203." evidence="22">
    <original>L</original>
    <variation>P</variation>
    <location>
        <position position="62"/>
    </location>
</feature>
<feature type="sequence variant" id="VAR_001431" description="In non-small cell lung carcinoma; dbSNP:rs1819720314." evidence="17">
    <original>H</original>
    <variation>Y</variation>
    <location>
        <position position="66"/>
    </location>
</feature>
<feature type="sequence variant" id="VAR_058552" description="In melanoma; loss of CDK4 binding." evidence="12">
    <location>
        <begin position="67"/>
        <end position="71"/>
    </location>
</feature>
<feature type="sequence variant" id="VAR_058553" description="In CMM2; partial loss of CDK4 binding; dbSNP:rs758389471." evidence="12">
    <original>G</original>
    <variation>R</variation>
    <location>
        <position position="67"/>
    </location>
</feature>
<feature type="sequence variant" id="VAR_001432" description="In CMM2; requires 2 nucleotide substitutions; dbSNP:rs876658534." evidence="22">
    <original>A</original>
    <variation>L</variation>
    <location>
        <position position="68"/>
    </location>
</feature>
<feature type="sequence variant" id="VAR_001433" description="In an esophagus tumor; dbSNP:rs1819719137.">
    <original>A</original>
    <variation>T</variation>
    <location>
        <position position="68"/>
    </location>
</feature>
<feature type="sequence variant" id="VAR_001434" description="In dbSNP:rs1060501260." evidence="20">
    <original>A</original>
    <variation>V</variation>
    <location>
        <position position="68"/>
    </location>
</feature>
<feature type="sequence variant" id="VAR_058554" description="Found in some patients with melanoma; partial loss of CDK4 binding; dbSNP:rs372670098." evidence="12">
    <original>E</original>
    <variation>G</variation>
    <location>
        <position position="69"/>
    </location>
</feature>
<feature type="sequence variant" id="VAR_001435" description="In a bladder tumor; dbSNP:rs121913383.">
    <original>E</original>
    <variation>K</variation>
    <location>
        <position position="69"/>
    </location>
</feature>
<feature type="sequence variant" id="VAR_001436" description="In a lung tumor; dbSNP:rs372670098.">
    <original>E</original>
    <variation>V</variation>
    <location>
        <position position="69"/>
    </location>
</feature>
<feature type="sequence variant" id="VAR_001437" description="In CMM2; dbSNP:rs2131095688." evidence="22">
    <original>N</original>
    <variation>K</variation>
    <location>
        <position position="71"/>
    </location>
</feature>
<feature type="sequence variant" id="VAR_001438" description="In dbSNP:rs559848002." evidence="13 16">
    <original>N</original>
    <variation>S</variation>
    <location>
        <position position="71"/>
    </location>
</feature>
<feature type="sequence variant" id="VAR_001439" description="In an esophagus tumor; dbSNP:rs1554654142.">
    <original>C</original>
    <variation>G</variation>
    <location>
        <position position="72"/>
    </location>
</feature>
<feature type="sequence variant" id="VAR_001440" description="In a bladder tumor; dbSNP:rs760640852.">
    <original>D</original>
    <variation>N</variation>
    <location>
        <position position="74"/>
    </location>
</feature>
<feature type="sequence variant" id="VAR_001441" description="In a biliary tract tumor; dbSNP:rs200429615.">
    <original>D</original>
    <variation>V</variation>
    <location>
        <position position="74"/>
    </location>
</feature>
<feature type="sequence variant" id="VAR_058555" description="In CMM2; loss of CDK4 binding; dbSNP:rs760640852." evidence="12">
    <original>D</original>
    <variation>Y</variation>
    <location>
        <position position="74"/>
    </location>
</feature>
<feature type="sequence variant" id="VAR_058556" description="In CMM2; loss of CDK4 binding; dbSNP:rs1563889628." evidence="12">
    <original>T</original>
    <variation>P</variation>
    <location>
        <position position="77"/>
    </location>
</feature>
<feature type="sequence variant" id="VAR_001442" description="In a head and neck tumor; dbSNP:rs1057519883.">
    <original>R</original>
    <variation>L</variation>
    <location>
        <position position="80"/>
    </location>
</feature>
<feature type="sequence variant" id="VAR_058557" description="In CMM2; loss of CDK4 binding; dbSNP:rs1057519883." evidence="12">
    <original>R</original>
    <variation>P</variation>
    <location>
        <position position="80"/>
    </location>
</feature>
<feature type="sequence variant" id="VAR_001443" description="In some patients with melanoma; impairs the function; dbSNP:rs11552823." evidence="13">
    <original>P</original>
    <variation>L</variation>
    <location>
        <position position="81"/>
    </location>
</feature>
<feature type="sequence variant" id="VAR_058558" description="In CMM2; loss of CDK4 binding; dbSNP:rs1334828764." evidence="12">
    <original>P</original>
    <variation>T</variation>
    <location>
        <position position="81"/>
    </location>
</feature>
<feature type="sequence variant" id="VAR_001445" description="In a lung tumor; dbSNP:rs121913385.">
    <original>H</original>
    <variation>N</variation>
    <location>
        <position position="83"/>
    </location>
</feature>
<feature type="sequence variant" id="VAR_053029" description="In dbSNP:rs34968276.">
    <original>H</original>
    <variation>Q</variation>
    <location>
        <position position="83"/>
    </location>
</feature>
<feature type="sequence variant" id="VAR_001444" description="In a pancreas tumor; also found in head and neck tumor; dbSNP:rs121913385.">
    <original>H</original>
    <variation>Y</variation>
    <location>
        <position position="83"/>
    </location>
</feature>
<feature type="sequence variant" id="VAR_001446" description="In a bladder tumor; dbSNP:rs1472715728.">
    <original>D</original>
    <variation>E</variation>
    <location>
        <position position="84"/>
    </location>
</feature>
<feature type="sequence variant" id="VAR_001447" description="In non-small cell lung carcinoma; dbSNP:rs11552822." evidence="17">
    <original>D</original>
    <variation>H</variation>
    <location>
        <position position="84"/>
    </location>
</feature>
<feature type="sequence variant" id="VAR_001448" description="In an esophagus tumor; also found in head and neck tumor; also found in a lung tumor; dbSNP:rs11552822.">
    <original>D</original>
    <variation>N</variation>
    <location>
        <position position="84"/>
    </location>
</feature>
<feature type="sequence variant" id="VAR_001449" description="In CMM2; also found in a lung tumor and a prostate tumor; dbSNP:rs11552822." evidence="4">
    <original>D</original>
    <variation>Y</variation>
    <location>
        <position position="84"/>
    </location>
</feature>
<feature type="sequence variant" id="VAR_001450" description="In dbSNP:rs878853646." evidence="20">
    <original>A</original>
    <variation>T</variation>
    <location>
        <position position="85"/>
    </location>
</feature>
<feature type="sequence variant" id="VAR_001451" description="In CMM2; impairs the function; dbSNP:rs878853647." evidence="13 16">
    <original>R</original>
    <variation>P</variation>
    <location>
        <position position="87"/>
    </location>
</feature>
<feature type="sequence variant" id="VAR_012317" description="In CMM2; partial loss of CDK4 binding; dbSNP:rs749714198." evidence="4">
    <original>R</original>
    <variation>W</variation>
    <location>
        <position position="87"/>
    </location>
</feature>
<feature type="sequence variant" id="VAR_001452" description="In a biliary tract tumor; dbSNP:rs1819706385.">
    <original>E</original>
    <variation>D</variation>
    <location>
        <position position="88"/>
    </location>
</feature>
<feature type="sequence variant" id="VAR_001453" description="In CMM2; somatic mutation; dbSNP:rs137854599." evidence="3">
    <original>G</original>
    <variation>D</variation>
    <location>
        <position position="89"/>
    </location>
</feature>
<feature type="sequence variant" id="VAR_001454" description="In CMM2; dbSNP:rs137854597.">
    <original>G</original>
    <variation>S</variation>
    <location>
        <position position="89"/>
    </location>
</feature>
<feature type="sequence variant" id="VAR_001455" description="In non-small cell lung carcinoma; dbSNP:rs2131094531." evidence="17">
    <original>T</original>
    <variation>A</variation>
    <location>
        <position position="93"/>
    </location>
</feature>
<feature type="sequence variant" id="VAR_023604" description="In CMM2; dbSNP:rs1819703656." evidence="9">
    <original>L</original>
    <variation>Q</variation>
    <location>
        <position position="94"/>
    </location>
</feature>
<feature type="sequence variant" id="VAR_001456" description="In non-small cell lung carcinoma." evidence="17">
    <original>V</original>
    <variation>A</variation>
    <location>
        <position position="95"/>
    </location>
</feature>
<feature type="sequence variant" id="VAR_001457" description="In CMM2; loss of CDK4 binding; dbSNP:rs1819702487." evidence="12 22">
    <original>L</original>
    <variation>R</variation>
    <location>
        <position position="97"/>
    </location>
</feature>
<feature type="sequence variant" id="VAR_001458" description="In CMM2.">
    <original>H</original>
    <variation>P</variation>
    <location>
        <position position="98"/>
    </location>
</feature>
<feature type="sequence variant" id="VAR_001459" description="In CMM2; dbSNP:rs752685118.">
    <original>H</original>
    <variation>Q</variation>
    <location>
        <position position="98"/>
    </location>
</feature>
<feature type="sequence variant" id="VAR_001460" description="In CMM2; loss of CDK4 binding; dbSNP:rs754806883.">
    <original>R</original>
    <variation>P</variation>
    <location>
        <position position="99"/>
    </location>
</feature>
<feature type="sequence variant" id="VAR_001461" description="In non-small cell lung carcinoma; dbSNP:rs754806883." evidence="17">
    <original>R</original>
    <variation>Q</variation>
    <location>
        <position position="99"/>
    </location>
</feature>
<feature type="sequence variant" id="VAR_053030" description="In dbSNP:rs34886500.">
    <original>R</original>
    <variation>W</variation>
    <location>
        <position position="99"/>
    </location>
</feature>
<feature type="sequence variant" id="VAR_001462" description="In CMM2; requires 2 nucleotide substitutions.">
    <original>A</original>
    <variation>L</variation>
    <location>
        <position position="100"/>
    </location>
</feature>
<feature type="sequence variant" id="VAR_001463" description="In dbSNP:rs200863613.">
    <original>A</original>
    <variation>P</variation>
    <location>
        <position position="100"/>
    </location>
</feature>
<feature type="sequence variant" id="VAR_001464" description="In CMM2 and FAMMMPC; impairs the function; dbSNP:rs104894094." evidence="4 13 16">
    <original>G</original>
    <variation>W</variation>
    <location>
        <position position="101"/>
    </location>
</feature>
<feature type="sequence variant" id="VAR_015818" description="Found in seminoma and medulloblastoma tissues from Li-Fraumeni syndrome patients carrying a mutation in TP53; somatic mutation; dbSNP:rs137854598." evidence="2">
    <original>A</original>
    <variation>E</variation>
    <location>
        <position position="102"/>
    </location>
</feature>
<feature type="sequence variant" id="VAR_053031" description="In dbSNP:rs35741010.">
    <original>A</original>
    <variation>T</variation>
    <location>
        <position position="102"/>
    </location>
</feature>
<feature type="sequence variant" id="VAR_001465">
    <location>
        <begin position="104"/>
        <end position="105"/>
    </location>
</feature>
<feature type="sequence variant" id="VAR_001466" description="In CMM2; dbSNP:rs1554654024." evidence="20">
    <original>R</original>
    <variation>C</variation>
    <location>
        <position position="107"/>
    </location>
</feature>
<feature type="sequence variant" id="VAR_001467" description="In dbSNP:rs370823171.">
    <original>R</original>
    <variation>H</variation>
    <location>
        <position position="107"/>
    </location>
</feature>
<feature type="sequence variant" id="VAR_001469" description="In a bladder tumor; dbSNP:rs121913381.">
    <original>D</original>
    <variation>H</variation>
    <location>
        <position position="108"/>
    </location>
</feature>
<feature type="sequence variant" id="VAR_001468" description="In a head and neck tumor; dbSNP:rs121913381.">
    <original>D</original>
    <variation>Y</variation>
    <location>
        <position position="108"/>
    </location>
</feature>
<feature type="sequence variant" id="VAR_035068" description="In CMM2." evidence="19">
    <original>R</original>
    <variation>RR</variation>
    <location>
        <position position="112"/>
    </location>
</feature>
<feature type="sequence variant" id="VAR_001470" description="In non-small cell lung carcinoma; dbSNP:rs121913386." evidence="17">
    <original>P</original>
    <variation>L</variation>
    <location>
        <position position="114"/>
    </location>
</feature>
<feature type="sequence variant" id="VAR_058559" description="Found in some patients with melanoma; loss of CDK4 binding; dbSNP:rs104894104." evidence="12">
    <original>P</original>
    <variation>S</variation>
    <location>
        <position position="114"/>
    </location>
</feature>
<feature type="sequence variant" id="VAR_001471" description="In CMM2; somatic mutation." evidence="3">
    <original>L</original>
    <variation>M</variation>
    <location>
        <position position="117"/>
    </location>
</feature>
<feature type="sequence variant" id="VAR_001472" description="In CMM2; dbSNP:rs1554653960." evidence="21">
    <original>A</original>
    <variation>T</variation>
    <location>
        <position position="118"/>
    </location>
</feature>
<feature type="sequence variant" id="VAR_001473" description="In a biliary tract tumor; dbSNP:rs1563888963.">
    <original>E</original>
    <variation>Q</variation>
    <location>
        <position position="119"/>
    </location>
</feature>
<feature type="sequence variant" id="VAR_001474" description="In non-small cell lung carcinoma." evidence="17">
    <original>E</original>
    <variation>A</variation>
    <location>
        <position position="120"/>
    </location>
</feature>
<feature type="sequence variant" id="VAR_001475" description="In non-small cell lung carcinoma; dbSNP:rs1819691962." evidence="17">
    <original>E</original>
    <variation>K</variation>
    <location>
        <position position="120"/>
    </location>
</feature>
<feature type="sequence variant" id="VAR_035069" description="In CMM2; dbSNP:rs113798404." evidence="7">
    <original>G</original>
    <variation>R</variation>
    <location>
        <position position="122"/>
    </location>
</feature>
<feature type="sequence variant" id="VAR_001476" description="In a biliary tract tumor; dbSNP:rs113798404.">
    <original>G</original>
    <variation>S</variation>
    <location>
        <position position="122"/>
    </location>
</feature>
<feature type="sequence variant" id="VAR_001477" description="In leukemia; dbSNP:rs6413463.">
    <original>H</original>
    <variation>Q</variation>
    <location>
        <position position="123"/>
    </location>
</feature>
<feature type="sequence variant" id="VAR_053032" description="In dbSNP:rs34170727.">
    <original>R</original>
    <variation>C</variation>
    <location>
        <position position="124"/>
    </location>
</feature>
<feature type="sequence variant" id="VAR_001478" description="In an esophagus tumor; dbSNP:rs747621669.">
    <original>R</original>
    <variation>H</variation>
    <location>
        <position position="124"/>
    </location>
</feature>
<feature type="sequence variant" id="VAR_001479" description="In CMM2; impairs the function; dbSNP:rs104894098." evidence="6 13 16">
    <original>V</original>
    <variation>D</variation>
    <location>
        <position position="126"/>
    </location>
</feature>
<feature type="sequence variant" id="VAR_001480" description="In squamous cell carcinoma; dbSNP:rs6413464." evidence="14">
    <original>A</original>
    <variation>S</variation>
    <location>
        <position position="127"/>
    </location>
</feature>
<feature type="sequence variant" id="VAR_001481" description="In non-small cell lung carcinoma; dbSNP:rs2131092506." evidence="17">
    <original>A</original>
    <variation>P</variation>
    <location>
        <position position="132"/>
    </location>
</feature>
<feature type="sequence variant" id="VAR_001482" description="In non-small cell lung carcinoma; dbSNP:rs757497674." evidence="17">
    <original>A</original>
    <variation>V</variation>
    <location>
        <position position="134"/>
    </location>
</feature>
<feature type="sequence variant" id="VAR_001483" description="In non-small cell lung carcinoma; dbSNP:rs1587330478." evidence="17">
    <original>H</original>
    <variation>Y</variation>
    <location>
        <position position="142"/>
    </location>
</feature>
<feature type="sequence variant" id="VAR_001484" description="In squamous cell carcinoma; dbSNP:rs116150891." evidence="14">
    <original>R</original>
    <variation>C</variation>
    <location>
        <position position="144"/>
    </location>
</feature>
<feature type="sequence variant" id="VAR_001486" description="In dbSNP:rs3731249." evidence="3 13 16 18 19 20 21">
    <original>A</original>
    <variation>T</variation>
    <location>
        <position position="148"/>
    </location>
</feature>
<feature type="sequence variant" id="VAR_001487" description="In non-small cell lung carcinoma." evidence="17">
    <original>G</original>
    <variation>V</variation>
    <location>
        <position position="150"/>
    </location>
</feature>
<feature type="strand" evidence="32">
    <location>
        <begin position="4"/>
        <end position="6"/>
    </location>
</feature>
<feature type="helix" evidence="30">
    <location>
        <begin position="15"/>
        <end position="22"/>
    </location>
</feature>
<feature type="helix" evidence="30">
    <location>
        <begin position="25"/>
        <end position="32"/>
    </location>
</feature>
<feature type="turn" evidence="30">
    <location>
        <begin position="33"/>
        <end position="35"/>
    </location>
</feature>
<feature type="strand" evidence="30">
    <location>
        <begin position="43"/>
        <end position="45"/>
    </location>
</feature>
<feature type="turn" evidence="30">
    <location>
        <begin position="48"/>
        <end position="50"/>
    </location>
</feature>
<feature type="helix" evidence="30">
    <location>
        <begin position="57"/>
        <end position="64"/>
    </location>
</feature>
<feature type="turn" evidence="30">
    <location>
        <begin position="65"/>
        <end position="67"/>
    </location>
</feature>
<feature type="turn" evidence="30">
    <location>
        <begin position="75"/>
        <end position="77"/>
    </location>
</feature>
<feature type="helix" evidence="30">
    <location>
        <begin position="81"/>
        <end position="88"/>
    </location>
</feature>
<feature type="helix" evidence="30">
    <location>
        <begin position="91"/>
        <end position="100"/>
    </location>
</feature>
<feature type="strand" evidence="29">
    <location>
        <begin position="109"/>
        <end position="111"/>
    </location>
</feature>
<feature type="helix" evidence="30">
    <location>
        <begin position="114"/>
        <end position="121"/>
    </location>
</feature>
<feature type="helix" evidence="30">
    <location>
        <begin position="124"/>
        <end position="130"/>
    </location>
</feature>
<feature type="turn" evidence="32">
    <location>
        <begin position="133"/>
        <end position="135"/>
    </location>
</feature>
<feature type="turn" evidence="31">
    <location>
        <begin position="141"/>
        <end position="143"/>
    </location>
</feature>
<feature type="strand" evidence="31">
    <location>
        <begin position="145"/>
        <end position="147"/>
    </location>
</feature>
<feature type="strand" evidence="29">
    <location>
        <begin position="150"/>
        <end position="153"/>
    </location>
</feature>
<feature type="sequence conflict" description="In Ref. 2; AAD11437." evidence="25" ref="2">
    <original>G</original>
    <variation>R</variation>
    <location sequence="P42771-3">
        <position position="54"/>
    </location>
</feature>
<feature type="sequence conflict" description="In Ref. 2; AAD11437." evidence="25" ref="2">
    <original>A</original>
    <variation>T</variation>
    <location sequence="P42771-3">
        <position position="112"/>
    </location>
</feature>
<proteinExistence type="evidence at protein level"/>
<accession>P42771</accession>
<accession>A5X2G7</accession>
<accession>D3DRK1</accession>
<accession>G3XAG3</accession>
<accession>O95440</accession>
<accession>Q15191</accession>
<accession>Q5VVJ5</accession>
<accession>Q96B52</accession>
<accession>Q9NP05</accession>
<reference key="1">
    <citation type="journal article" date="1993" name="Nature">
        <title>A new regulatory motif in cell-cycle control causing specific inhibition of cyclin D/CDK4.</title>
        <authorList>
            <person name="Serrano M."/>
            <person name="Hannon G.J."/>
            <person name="Beach D."/>
        </authorList>
    </citation>
    <scope>NUCLEOTIDE SEQUENCE [MRNA] (ISOFORM 1)</scope>
</reference>
<reference key="2">
    <citation type="journal article" date="1999" name="Oncogene">
        <title>Tissue-specific alternative splicing in the human INK4a/ARF cell cycle regulatory locus.</title>
        <authorList>
            <person name="Robertson K.D."/>
            <person name="Jones P.A."/>
        </authorList>
    </citation>
    <scope>NUCLEOTIDE SEQUENCE [MRNA] (ISOFORM 3)</scope>
    <scope>TISSUE SPECIFICITY</scope>
</reference>
<reference key="3">
    <citation type="journal article" date="2002" name="J. Biol. Chem.">
        <title>Prevalent involvement of illegitimate V(D)J recombination in chromosome 9p21 deletions in lymphoid leukemia.</title>
        <authorList>
            <person name="Kitagawa Y."/>
            <person name="Inoue K."/>
            <person name="Sasaki S."/>
            <person name="Hayashi Y."/>
            <person name="Matsuo Y."/>
            <person name="Lieber M.R."/>
            <person name="Mizoguchi H."/>
            <person name="Yokota J."/>
            <person name="Kohno T."/>
        </authorList>
    </citation>
    <scope>NUCLEOTIDE SEQUENCE [GENOMIC DNA]</scope>
</reference>
<reference key="4">
    <citation type="journal article" date="2007" name="Oncogene">
        <title>Human p16gamma, a novel transcriptional variant of p16(INK4A), coexpresses with p16(INK4A) in cancer cells and inhibits cell-cycle progression.</title>
        <authorList>
            <person name="Lin Y.C."/>
            <person name="Diccianni M.B."/>
            <person name="Kim Y."/>
            <person name="Lin H.H."/>
            <person name="Lee C.H."/>
            <person name="Lin R.J."/>
            <person name="Joo S.H."/>
            <person name="Li J."/>
            <person name="Chuang T.J."/>
            <person name="Yang A.S."/>
            <person name="Kuo H.H."/>
            <person name="Tsai M.D."/>
            <person name="Yu A.L."/>
        </authorList>
    </citation>
    <scope>NUCLEOTIDE SEQUENCE [MRNA] (ISOFORM 5)</scope>
    <scope>ALTERNATIVE SPLICING</scope>
</reference>
<reference key="5">
    <citation type="submission" date="2002-07" db="EMBL/GenBank/DDBJ databases">
        <authorList>
            <consortium name="NIEHS SNPs program"/>
        </authorList>
    </citation>
    <scope>NUCLEOTIDE SEQUENCE [GENOMIC DNA]</scope>
</reference>
<reference key="6">
    <citation type="journal article" date="2004" name="Nature">
        <title>DNA sequence and analysis of human chromosome 9.</title>
        <authorList>
            <person name="Humphray S.J."/>
            <person name="Oliver K."/>
            <person name="Hunt A.R."/>
            <person name="Plumb R.W."/>
            <person name="Loveland J.E."/>
            <person name="Howe K.L."/>
            <person name="Andrews T.D."/>
            <person name="Searle S."/>
            <person name="Hunt S.E."/>
            <person name="Scott C.E."/>
            <person name="Jones M.C."/>
            <person name="Ainscough R."/>
            <person name="Almeida J.P."/>
            <person name="Ambrose K.D."/>
            <person name="Ashwell R.I.S."/>
            <person name="Babbage A.K."/>
            <person name="Babbage S."/>
            <person name="Bagguley C.L."/>
            <person name="Bailey J."/>
            <person name="Banerjee R."/>
            <person name="Barker D.J."/>
            <person name="Barlow K.F."/>
            <person name="Bates K."/>
            <person name="Beasley H."/>
            <person name="Beasley O."/>
            <person name="Bird C.P."/>
            <person name="Bray-Allen S."/>
            <person name="Brown A.J."/>
            <person name="Brown J.Y."/>
            <person name="Burford D."/>
            <person name="Burrill W."/>
            <person name="Burton J."/>
            <person name="Carder C."/>
            <person name="Carter N.P."/>
            <person name="Chapman J.C."/>
            <person name="Chen Y."/>
            <person name="Clarke G."/>
            <person name="Clark S.Y."/>
            <person name="Clee C.M."/>
            <person name="Clegg S."/>
            <person name="Collier R.E."/>
            <person name="Corby N."/>
            <person name="Crosier M."/>
            <person name="Cummings A.T."/>
            <person name="Davies J."/>
            <person name="Dhami P."/>
            <person name="Dunn M."/>
            <person name="Dutta I."/>
            <person name="Dyer L.W."/>
            <person name="Earthrowl M.E."/>
            <person name="Faulkner L."/>
            <person name="Fleming C.J."/>
            <person name="Frankish A."/>
            <person name="Frankland J.A."/>
            <person name="French L."/>
            <person name="Fricker D.G."/>
            <person name="Garner P."/>
            <person name="Garnett J."/>
            <person name="Ghori J."/>
            <person name="Gilbert J.G.R."/>
            <person name="Glison C."/>
            <person name="Grafham D.V."/>
            <person name="Gribble S."/>
            <person name="Griffiths C."/>
            <person name="Griffiths-Jones S."/>
            <person name="Grocock R."/>
            <person name="Guy J."/>
            <person name="Hall R.E."/>
            <person name="Hammond S."/>
            <person name="Harley J.L."/>
            <person name="Harrison E.S.I."/>
            <person name="Hart E.A."/>
            <person name="Heath P.D."/>
            <person name="Henderson C.D."/>
            <person name="Hopkins B.L."/>
            <person name="Howard P.J."/>
            <person name="Howden P.J."/>
            <person name="Huckle E."/>
            <person name="Johnson C."/>
            <person name="Johnson D."/>
            <person name="Joy A.A."/>
            <person name="Kay M."/>
            <person name="Keenan S."/>
            <person name="Kershaw J.K."/>
            <person name="Kimberley A.M."/>
            <person name="King A."/>
            <person name="Knights A."/>
            <person name="Laird G.K."/>
            <person name="Langford C."/>
            <person name="Lawlor S."/>
            <person name="Leongamornlert D.A."/>
            <person name="Leversha M."/>
            <person name="Lloyd C."/>
            <person name="Lloyd D.M."/>
            <person name="Lovell J."/>
            <person name="Martin S."/>
            <person name="Mashreghi-Mohammadi M."/>
            <person name="Matthews L."/>
            <person name="McLaren S."/>
            <person name="McLay K.E."/>
            <person name="McMurray A."/>
            <person name="Milne S."/>
            <person name="Nickerson T."/>
            <person name="Nisbett J."/>
            <person name="Nordsiek G."/>
            <person name="Pearce A.V."/>
            <person name="Peck A.I."/>
            <person name="Porter K.M."/>
            <person name="Pandian R."/>
            <person name="Pelan S."/>
            <person name="Phillimore B."/>
            <person name="Povey S."/>
            <person name="Ramsey Y."/>
            <person name="Rand V."/>
            <person name="Scharfe M."/>
            <person name="Sehra H.K."/>
            <person name="Shownkeen R."/>
            <person name="Sims S.K."/>
            <person name="Skuce C.D."/>
            <person name="Smith M."/>
            <person name="Steward C.A."/>
            <person name="Swarbreck D."/>
            <person name="Sycamore N."/>
            <person name="Tester J."/>
            <person name="Thorpe A."/>
            <person name="Tracey A."/>
            <person name="Tromans A."/>
            <person name="Thomas D.W."/>
            <person name="Wall M."/>
            <person name="Wallis J.M."/>
            <person name="West A.P."/>
            <person name="Whitehead S.L."/>
            <person name="Willey D.L."/>
            <person name="Williams S.A."/>
            <person name="Wilming L."/>
            <person name="Wray P.W."/>
            <person name="Young L."/>
            <person name="Ashurst J.L."/>
            <person name="Coulson A."/>
            <person name="Blocker H."/>
            <person name="Durbin R.M."/>
            <person name="Sulston J.E."/>
            <person name="Hubbard T."/>
            <person name="Jackson M.J."/>
            <person name="Bentley D.R."/>
            <person name="Beck S."/>
            <person name="Rogers J."/>
            <person name="Dunham I."/>
        </authorList>
    </citation>
    <scope>NUCLEOTIDE SEQUENCE [LARGE SCALE GENOMIC DNA]</scope>
</reference>
<reference key="7">
    <citation type="submission" date="2005-09" db="EMBL/GenBank/DDBJ databases">
        <authorList>
            <person name="Mural R.J."/>
            <person name="Istrail S."/>
            <person name="Sutton G.G."/>
            <person name="Florea L."/>
            <person name="Halpern A.L."/>
            <person name="Mobarry C.M."/>
            <person name="Lippert R."/>
            <person name="Walenz B."/>
            <person name="Shatkay H."/>
            <person name="Dew I."/>
            <person name="Miller J.R."/>
            <person name="Flanigan M.J."/>
            <person name="Edwards N.J."/>
            <person name="Bolanos R."/>
            <person name="Fasulo D."/>
            <person name="Halldorsson B.V."/>
            <person name="Hannenhalli S."/>
            <person name="Turner R."/>
            <person name="Yooseph S."/>
            <person name="Lu F."/>
            <person name="Nusskern D.R."/>
            <person name="Shue B.C."/>
            <person name="Zheng X.H."/>
            <person name="Zhong F."/>
            <person name="Delcher A.L."/>
            <person name="Huson D.H."/>
            <person name="Kravitz S.A."/>
            <person name="Mouchard L."/>
            <person name="Reinert K."/>
            <person name="Remington K.A."/>
            <person name="Clark A.G."/>
            <person name="Waterman M.S."/>
            <person name="Eichler E.E."/>
            <person name="Adams M.D."/>
            <person name="Hunkapiller M.W."/>
            <person name="Myers E.W."/>
            <person name="Venter J.C."/>
        </authorList>
    </citation>
    <scope>NUCLEOTIDE SEQUENCE [LARGE SCALE GENOMIC DNA]</scope>
</reference>
<reference key="8">
    <citation type="journal article" date="1996" name="Mol. Cell. Biol.">
        <title>Regulation of p16CDKN2 expression and its implications for cell immortalization and senescence.</title>
        <authorList>
            <person name="Hara E."/>
            <person name="Smith R."/>
            <person name="Parry D."/>
            <person name="Tahara H."/>
            <person name="Stone S."/>
            <person name="Peters G."/>
        </authorList>
    </citation>
    <scope>NUCLEOTIDE SEQUENCE [GENOMIC DNA] OF 1-20</scope>
</reference>
<reference key="9">
    <citation type="journal article" date="1994" name="Nature">
        <title>Deletions of the cyclin-dependent kinase-4 inhibitor gene in multiple human cancers.</title>
        <authorList>
            <person name="Nobori T."/>
            <person name="Miura K."/>
            <person name="Wu D.J."/>
            <person name="Lois A."/>
            <person name="Takabayashi K."/>
            <person name="Carson D.A."/>
        </authorList>
    </citation>
    <scope>NUCLEOTIDE SEQUENCE [GENOMIC DNA] OF 51-156</scope>
</reference>
<reference key="10">
    <citation type="journal article" date="1994" name="Science">
        <title>A cell cycle regulator potentially involved in genesis of many tumor types.</title>
        <authorList>
            <person name="Kamb A."/>
            <person name="Gruis N.A."/>
            <person name="Weaver-Feldhaus J."/>
            <person name="Liu Q."/>
            <person name="Harshman K."/>
            <person name="Tavtigian S.V."/>
            <person name="Stockert E."/>
            <person name="Day R.S. III"/>
            <person name="Johnson B.E."/>
            <person name="Skolnick M.H."/>
        </authorList>
    </citation>
    <scope>NUCLEOTIDE SEQUENCE [GENOMIC DNA] OF 51-152</scope>
</reference>
<reference key="11">
    <citation type="journal article" date="1994" name="Proc. Natl. Acad. Sci. U.S.A.">
        <title>Mutations and altered expression of p16INK4 in human cancer.</title>
        <authorList>
            <person name="Okamoto A."/>
            <person name="Demetrick D.J."/>
            <person name="Spillare E.A."/>
            <person name="Hagiwara K."/>
            <person name="Hussain S.P."/>
            <person name="Bennett W.P."/>
            <person name="Forrester K."/>
            <person name="Gerwin B."/>
            <person name="Serrano M."/>
            <person name="Beach D.H."/>
            <person name="Harris C.C."/>
        </authorList>
    </citation>
    <scope>FUNCTION</scope>
</reference>
<reference key="12">
    <citation type="journal article" date="2003" name="J. Biol. Chem.">
        <title>Phosphorylation of p16INK4A correlates with Cdk4 association.</title>
        <authorList>
            <person name="Gump J."/>
            <person name="Stokoe D."/>
            <person name="McCormick F."/>
        </authorList>
    </citation>
    <scope>PHOSPHORYLATION AT SER-7; SER-8; SER-140 AND SER-152</scope>
</reference>
<reference key="13">
    <citation type="journal article" date="2006" name="Mol. Cell. Biol.">
        <title>Regulated activating Thr172 phosphorylation of cyclin-dependent kinase 4(CDK4): its relationship with cyclins and CDK 'inhibitors'.</title>
        <authorList>
            <person name="Bockstaele L."/>
            <person name="Kooken H."/>
            <person name="Libert F."/>
            <person name="Paternot S."/>
            <person name="Dumont J.E."/>
            <person name="de Launoit Y."/>
            <person name="Roger P.P."/>
            <person name="Coulonval K."/>
        </authorList>
    </citation>
    <scope>INTERACTION WITH CDK4</scope>
    <scope>FUNCTION</scope>
</reference>
<reference key="14">
    <citation type="journal article" date="2007" name="Biochem. Biophys. Res. Commun.">
        <title>Identification and characterization of a novel protein ISOC2 that interacts with p16INK4a.</title>
        <authorList>
            <person name="Huang X."/>
            <person name="Shi Z."/>
            <person name="Wang W."/>
            <person name="Bai J."/>
            <person name="Chen Z."/>
            <person name="Xu J."/>
            <person name="Zhang D."/>
            <person name="Fu S."/>
        </authorList>
    </citation>
    <scope>INTERACTION WITH ISOC2</scope>
    <scope>SUBCELLULAR LOCATION</scope>
</reference>
<reference key="15">
    <citation type="journal article" date="2009" name="Anal. Chem.">
        <title>Lys-N and trypsin cover complementary parts of the phosphoproteome in a refined SCX-based approach.</title>
        <authorList>
            <person name="Gauci S."/>
            <person name="Helbig A.O."/>
            <person name="Slijper M."/>
            <person name="Krijgsveld J."/>
            <person name="Heck A.J."/>
            <person name="Mohammed S."/>
        </authorList>
    </citation>
    <scope>ACETYLATION [LARGE SCALE ANALYSIS] AT MET-1</scope>
    <scope>IDENTIFICATION BY MASS SPECTROMETRY [LARGE SCALE ANALYSIS]</scope>
</reference>
<reference key="16">
    <citation type="journal article" date="2011" name="BMC Syst. Biol.">
        <title>Initial characterization of the human central proteome.</title>
        <authorList>
            <person name="Burkard T.R."/>
            <person name="Planyavsky M."/>
            <person name="Kaupe I."/>
            <person name="Breitwieser F.P."/>
            <person name="Buerckstuemmer T."/>
            <person name="Bennett K.L."/>
            <person name="Superti-Furga G."/>
            <person name="Colinge J."/>
        </authorList>
    </citation>
    <scope>IDENTIFICATION BY MASS SPECTROMETRY [LARGE SCALE ANALYSIS]</scope>
</reference>
<reference key="17">
    <citation type="journal article" date="2012" name="Proc. Natl. Acad. Sci. U.S.A.">
        <title>N-terminal acetylome analyses and functional insights of the N-terminal acetyltransferase NatB.</title>
        <authorList>
            <person name="Van Damme P."/>
            <person name="Lasa M."/>
            <person name="Polevoda B."/>
            <person name="Gazquez C."/>
            <person name="Elosegui-Artola A."/>
            <person name="Kim D.S."/>
            <person name="De Juan-Pardo E."/>
            <person name="Demeyer K."/>
            <person name="Hole K."/>
            <person name="Larrea E."/>
            <person name="Timmerman E."/>
            <person name="Prieto J."/>
            <person name="Arnesen T."/>
            <person name="Sherman F."/>
            <person name="Gevaert K."/>
            <person name="Aldabe R."/>
        </authorList>
    </citation>
    <scope>ACETYLATION [LARGE SCALE ANALYSIS] AT MET-1</scope>
    <scope>IDENTIFICATION BY MASS SPECTROMETRY [LARGE SCALE ANALYSIS]</scope>
</reference>
<reference key="18">
    <citation type="journal article" date="1998" name="Nature">
        <title>Structural basis for inhibition of the cyclin-dependent kinase Cdk6 by the tumour suppressor p16INK4a.</title>
        <authorList>
            <person name="Russo A.A."/>
            <person name="Tong L."/>
            <person name="Lee J.O."/>
            <person name="Jeffrey P.D."/>
            <person name="Pavletich N.P."/>
        </authorList>
    </citation>
    <scope>X-RAY CRYSTALLOGRAPHY (2.8 ANGSTROMS) OF COMPLEX WITH CDK6</scope>
</reference>
<reference key="19">
    <citation type="journal article" date="1999" name="J. Mol. Biol.">
        <title>Tumor suppressor INK4: comparisons of conformational properties between p16(INK4A) and p18(INK4C).</title>
        <authorList>
            <person name="Yuan C."/>
            <person name="Li J."/>
            <person name="Selby T.L."/>
            <person name="Byeon I.-J."/>
            <person name="Tsai M.-D."/>
        </authorList>
    </citation>
    <scope>STRUCTURE BY NMR</scope>
</reference>
<reference key="20">
    <citation type="journal article" date="2000" name="Protein Sci.">
        <title>Tumor suppressor INK4: refinement of p16INK4A structure and determination of p15INK4B structure by comparative modeling and NMR data.</title>
        <authorList>
            <person name="Yuan C."/>
            <person name="Selby T.L."/>
            <person name="Li J."/>
            <person name="Byeon I.J."/>
            <person name="Tsai M.D."/>
        </authorList>
    </citation>
    <scope>STRUCTURE BY NMR</scope>
</reference>
<reference key="21">
    <citation type="journal article" date="1996" name="Cancer Surv.">
        <title>CDKN2 mutations in melanoma.</title>
        <authorList>
            <person name="Dracopoli N.C."/>
            <person name="Fountain J.W."/>
        </authorList>
    </citation>
    <scope>REVIEW ON MELANOMA VARIANTS</scope>
</reference>
<reference key="22">
    <citation type="journal article" date="1996" name="Hum. Mutat.">
        <title>CDKN2A (p16INK4A) somatic and germline mutations.</title>
        <authorList>
            <person name="Smith-Soerensen B."/>
            <person name="Hovig E."/>
        </authorList>
    </citation>
    <scope>REVIEW ON VARIANTS</scope>
</reference>
<reference key="23">
    <citation type="journal article" date="1994" name="Biochem. Biophys. Res. Commun.">
        <title>Somatic mutations of the MTS (multiple tumor suppressor) 1/CDK4l (cyclin-dependent kinase-4 inhibitor) gene in human primary non-small cell lung carcinomas.</title>
        <authorList>
            <person name="Hayashi N."/>
            <person name="Sugimoto Y."/>
            <person name="Tsuchiya E."/>
            <person name="Ogawa M."/>
            <person name="Nakamura Y."/>
        </authorList>
    </citation>
    <scope>VARIANTS NON-SMALL CELL LUNG CARCINOMA TYR-66; HIS-84; ALA-93; ALA-95; GLN-99; LEU-114; ALA-120; LYS-120; PRO-132; VAL-134; TYR-142 AND VAL-150</scope>
</reference>
<reference key="24">
    <citation type="journal article" date="1994" name="Nat. Genet.">
        <title>Germline p16 mutations in familial melanoma.</title>
        <authorList>
            <person name="Hussussian C.J."/>
            <person name="Struewing J.P."/>
            <person name="Goldstein A.M."/>
            <person name="Higgins P.A.T."/>
            <person name="Ally D.S."/>
            <person name="Sheahan M.D."/>
            <person name="Clark W.H. Jr."/>
            <person name="Tucker M.A."/>
            <person name="Dracopoli N.C."/>
        </authorList>
    </citation>
    <scope>VARIANTS CMM2 PRO-87; TRP-101 AND ASP-126</scope>
    <scope>VARIANTS THR-49; SER-71 AND THR-148</scope>
</reference>
<reference key="25">
    <citation type="journal article" date="1994" name="Oncogene">
        <title>The MTS1 gene is frequently mutated in primary human esophageal tumors.</title>
        <authorList>
            <person name="Zhou X."/>
            <person name="Tarmin L."/>
            <person name="Yin J."/>
            <person name="Jiang H.-Y."/>
            <person name="Suzuki H."/>
            <person name="Rhyu M.-G."/>
            <person name="Abraham J.M."/>
            <person name="Meltzer S.J."/>
        </authorList>
    </citation>
    <scope>VARIANTS SQUAMOUS CELL CARCINOMA SER-127 AND CYS-144</scope>
</reference>
<reference key="26">
    <citation type="journal article" date="1995" name="Cancer Res.">
        <title>Mutations in the p16INK4/MTS1/CDKN2, p15INK4B/MTS2, and p18 genes in primary and metastatic lung cancer.</title>
        <authorList>
            <person name="Okamoto A."/>
            <person name="Hussain S.P."/>
            <person name="Hagiwara K."/>
            <person name="Spillare E.A."/>
            <person name="Rusin M.R."/>
            <person name="Demetrick D.J."/>
            <person name="Serrano M."/>
            <person name="Hannon G.J."/>
            <person name="Shiseki M."/>
            <person name="Zariwala M."/>
            <person name="Xiong Y."/>
            <person name="Beach D.H."/>
            <person name="Yokota J."/>
            <person name="Harris C.C."/>
        </authorList>
    </citation>
    <scope>VARIANTS</scope>
</reference>
<reference key="27">
    <citation type="journal article" date="1995" name="Hum. Mol. Genet.">
        <title>Mutations of the CDKN2/p16INK4 gene in Australian melanoma kindreds.</title>
        <authorList>
            <person name="Walker G.J."/>
            <person name="Hussussian C.J."/>
            <person name="Flores J.F."/>
            <person name="Glendening J.M."/>
            <person name="Haluska F.G."/>
            <person name="Dracopoli N.C."/>
            <person name="Hayward N.K."/>
            <person name="Fountain J.W."/>
        </authorList>
    </citation>
    <scope>VARIANTS CMM2 PRO-32; ALA-35; GLU-35; ARG-50 AND ILE-53</scope>
    <scope>VARIANT THR-148</scope>
</reference>
<reference key="28">
    <citation type="journal article" date="1995" name="Nat. Genet.">
        <title>Mutations associated with familial melanoma impair p16INK4 function.</title>
        <authorList>
            <person name="Ranade K."/>
            <person name="Hussussian C.J."/>
            <person name="Sikorski R.S."/>
            <person name="Varmus H.E."/>
            <person name="Goldstein A.M."/>
            <person name="Tucker M.A."/>
            <person name="Serrano M."/>
            <person name="Hannon G.J."/>
            <person name="Beach D."/>
            <person name="Dracopoli N.C."/>
        </authorList>
    </citation>
    <scope>CHARACTERIZATION OF VARIANTS THR-49; SER-71; LEU-81; PRO-87; TRP-101; ASP-126 AND THR-148</scope>
</reference>
<reference key="29">
    <citation type="journal article" date="1996" name="Cancer Res.">
        <title>Novel germline p16 mutation in familial malignant melanoma in southern Sweden.</title>
        <authorList>
            <person name="Borg A."/>
            <person name="Johannsson U."/>
            <person name="Johannsson O."/>
            <person name="Haakansson S."/>
            <person name="Westerdahl J."/>
            <person name="Maasbaeck A."/>
            <person name="Olsson H."/>
            <person name="Ingvar C."/>
        </authorList>
    </citation>
    <scope>VARIANT CMM2 ARG-112 INS</scope>
    <scope>VARIANT THR-148</scope>
</reference>
<reference key="30">
    <citation type="journal article" date="1996" name="Proc. Natl. Acad. Sci. U.S.A.">
        <title>Prevalence of germ-line mutations in p16, p19ARF, and CDK4 in familial melanoma: analysis of a clinic-based population.</title>
        <authorList>
            <person name="Fitzgerald M.G."/>
            <person name="Harkin D.P."/>
            <person name="Silva-Arrieta S."/>
            <person name="Macdonald D.J."/>
            <person name="Lucchina L.C."/>
            <person name="Unsal H."/>
            <person name="O'Neill E."/>
            <person name="Koh J."/>
            <person name="Finkelstein D.M."/>
            <person name="Isselbacher K.J."/>
            <person name="Sober A.J."/>
            <person name="Haber D.A."/>
        </authorList>
    </citation>
    <scope>VARIANTS CMM2 ILE-53 AND CYS-107</scope>
    <scope>VARIANTS VAL-68; THR-85 AND THR-148</scope>
</reference>
<reference key="31">
    <citation type="journal article" date="1997" name="Hum. Mol. Genet.">
        <title>Germline mutations of the CDKN2 gene in UK melanoma families.</title>
        <authorList>
            <person name="Harland M."/>
            <person name="Meloni R."/>
            <person name="Gruis N."/>
            <person name="Pinney E."/>
            <person name="Brookes S."/>
            <person name="Spurr N.K."/>
            <person name="Frischauf A.-M."/>
            <person name="Bataille V."/>
            <person name="Peters G."/>
            <person name="Cuzick J."/>
            <person name="Selby P."/>
            <person name="Bishop D.T."/>
            <person name="Bishop J.N."/>
        </authorList>
    </citation>
    <scope>VARIANTS CMM2 PRO-24; ILE-53 AND THR-118</scope>
    <scope>VARIANT THR-148</scope>
</reference>
<reference key="32">
    <citation type="journal article" date="1998" name="Hum. Mol. Genet.">
        <title>Prevalence of p16 and CDK4 germline mutations in 48 melanoma-prone families in France.</title>
        <authorList>
            <person name="Soufir N."/>
            <person name="Avril M.-F."/>
            <person name="Chompret A."/>
            <person name="Demenais F."/>
            <person name="Bombled J."/>
            <person name="Spatz A."/>
            <person name="Stoppa-Lyonnet D."/>
            <person name="Benard J."/>
            <person name="Bressac-De Paillerets B."/>
        </authorList>
    </citation>
    <scope>VARIANTS CMM2 ILE-56; PRO-62; LEU-68; LYS-71 AND ARG-97</scope>
</reference>
<reference key="33">
    <citation type="journal article" date="1998" name="Hum. Mol. Genet.">
        <authorList>
            <person name="Soufir N."/>
            <person name="Avril M.-F."/>
            <person name="Chompret A."/>
            <person name="Demenais F."/>
            <person name="Bombled J."/>
            <person name="Spatz A."/>
            <person name="Stoppa-Lyonnet D."/>
            <person name="Benard J."/>
            <person name="Bressac-De Paillerets B."/>
        </authorList>
    </citation>
    <scope>ERRATUM OF PUBMED:9425228</scope>
</reference>
<reference key="34">
    <citation type="journal article" date="1998" name="Hum. Mutat.">
        <title>Five novel somatic CDKN2/p16 mutations identified in melanoma, glioma and carcinoma of the pancreas.</title>
        <authorList>
            <person name="Gretarsdottir S."/>
            <person name="Olafsdottir G.H."/>
            <person name="Borg A."/>
        </authorList>
    </citation>
    <scope>VARIANTS CMM2 LEU-48; ASP-89 AND MET-117</scope>
    <scope>VARIANT PANCREAS CARCINOMA VAL-57</scope>
    <scope>VARIANT THR-148</scope>
</reference>
<reference key="35">
    <citation type="journal article" date="1999" name="Cancer Genet. Cytogenet.">
        <title>Hereditary TP53 codon 292 and somatic P16INK4A codon 94 mutations in a Li-Fraumeni syndrome family.</title>
        <authorList>
            <person name="Gueran S."/>
            <person name="Tunca Y."/>
            <person name="Imirzalioglu N."/>
        </authorList>
    </citation>
    <scope>VARIANT GLU-102</scope>
</reference>
<reference key="36">
    <citation type="journal article" date="2001" name="Br. J. Cancer">
        <title>A common founder for the V126D CDKN2A mutation in seven North American melanoma-prone families.</title>
        <authorList>
            <person name="Goldstein A.M."/>
            <person name="Liu L."/>
            <person name="Shennan M.G."/>
            <person name="Hogg D."/>
            <person name="Tucker M.A."/>
            <person name="Struewing J.P."/>
        </authorList>
    </citation>
    <scope>VARIANT CMM2 ASP-126</scope>
</reference>
<reference key="37">
    <citation type="journal article" date="2001" name="Hum. Mol. Genet.">
        <title>A germline deletion of p14(ARF) but not CDKN2A in a melanoma-neural system tumour syndrome family.</title>
        <authorList>
            <person name="Randerson-Moor J.A."/>
            <person name="Harland M."/>
            <person name="Williams S."/>
            <person name="Cuthbert-Heavens D."/>
            <person name="Sheridan E."/>
            <person name="Aveyard J."/>
            <person name="Sibley K."/>
            <person name="Whitaker L."/>
            <person name="Knowles M."/>
            <person name="Bishop J.N."/>
            <person name="Bishop D.T."/>
        </authorList>
    </citation>
    <scope>INVOLVEMENT IN MASTS</scope>
</reference>
<reference key="38">
    <citation type="journal article" date="2002" name="Hum. Mol. Genet.">
        <title>Germline mutation of ARF in a melanoma kindred.</title>
        <authorList>
            <person name="Hewitt C."/>
            <person name="Lee Wu C."/>
            <person name="Evans G."/>
            <person name="Howell A."/>
            <person name="Elles R.G."/>
            <person name="Jordan R."/>
            <person name="Sloan P."/>
            <person name="Read A.P."/>
            <person name="Thakker N."/>
        </authorList>
    </citation>
    <scope>VARIANT CMM2 ARG-122</scope>
</reference>
<reference key="39">
    <citation type="journal article" date="1999" name="J. Med. Genet.">
        <title>CDKN2A mutations in Spanish cutaneous malignant melanoma families and patients with multiple melanomas and other neoplasia.</title>
        <authorList>
            <person name="Ruiz A."/>
            <person name="Puig S."/>
            <person name="Malvehy J."/>
            <person name="Lazaro C."/>
            <person name="Lynch M."/>
            <person name="Gimenez-Arnau A.M."/>
            <person name="Puig L."/>
            <person name="Sanchez-Conejo J."/>
            <person name="Estivill X."/>
            <person name="Castel T."/>
        </authorList>
    </citation>
    <scope>VARIANTS CMM2 GLY-59; TYR-84; TRP-87 AND TRP-101</scope>
</reference>
<reference key="40">
    <citation type="journal article" date="2003" name="Invest. Ophthalmol. Vis. Sci.">
        <title>Contribution of germline mutations in BRCA2, P16(INK4A), P14(ARF) and P15 to uveal melanoma.</title>
        <authorList>
            <person name="Hearle N."/>
            <person name="Damato B.E."/>
            <person name="Humphreys J."/>
            <person name="Wixey J."/>
            <person name="Green H."/>
            <person name="Stone J."/>
            <person name="Easton D.F."/>
            <person name="Houlston R.S."/>
        </authorList>
    </citation>
    <scope>POSSIBLE INVOLVEMENT IN SUSCEPTIBILITY TO UVEAL MELANOMA</scope>
</reference>
<reference key="41">
    <citation type="journal article" date="2003" name="Melanoma Res.">
        <title>A novel L94Q mutation in the CDKN2A gene in a melanoma kindred.</title>
        <authorList>
            <person name="Avbelj M."/>
            <person name="Hocevar M."/>
            <person name="Trebusak-Podkrajsek K."/>
            <person name="Krzisnik C."/>
            <person name="Battelino T."/>
        </authorList>
    </citation>
    <scope>VARIANT CMM2 GLN-94</scope>
</reference>
<reference key="42">
    <citation type="journal article" date="2009" name="Hum. Mutat.">
        <title>Functional, structural, and genetic evaluation of 20 CDKN2A germ line mutations identified in melanoma-prone families or patients.</title>
        <authorList>
            <person name="Kannengiesser C."/>
            <person name="Brookes S."/>
            <person name="del Arroyo A.G."/>
            <person name="Pham D."/>
            <person name="Bombled J."/>
            <person name="Barrois M."/>
            <person name="Mauffret O."/>
            <person name="Avril M.F."/>
            <person name="Chompret A."/>
            <person name="Lenoir G.M."/>
            <person name="Sarasin A."/>
            <person name="Peters G."/>
            <person name="Bressac-de Paillerets B."/>
        </authorList>
    </citation>
    <scope>VARIANTS CMM2 THR-ALA-19 INS; VAL-35; ARG-67; 67-GLY--ASN-71 DEL; TYR-74; PRO-77; PRO-80; THR-81 AND ARG-97</scope>
    <scope>VARIANTS GLN-24; GLY-69 AND SER-114</scope>
    <scope>CHARACTERIZATION OF VARIANTS</scope>
</reference>
<gene>
    <name evidence="26" type="primary">CDKN2A</name>
    <name type="synonym">CDKN2</name>
    <name type="synonym">MTS1</name>
</gene>
<organism>
    <name type="scientific">Homo sapiens</name>
    <name type="common">Human</name>
    <dbReference type="NCBI Taxonomy" id="9606"/>
    <lineage>
        <taxon>Eukaryota</taxon>
        <taxon>Metazoa</taxon>
        <taxon>Chordata</taxon>
        <taxon>Craniata</taxon>
        <taxon>Vertebrata</taxon>
        <taxon>Euteleostomi</taxon>
        <taxon>Mammalia</taxon>
        <taxon>Eutheria</taxon>
        <taxon>Euarchontoglires</taxon>
        <taxon>Primates</taxon>
        <taxon>Haplorrhini</taxon>
        <taxon>Catarrhini</taxon>
        <taxon>Hominidae</taxon>
        <taxon>Homo</taxon>
    </lineage>
</organism>
<name>CDN2A_HUMAN</name>
<keyword id="KW-0002">3D-structure</keyword>
<keyword id="KW-0007">Acetylation</keyword>
<keyword id="KW-0025">Alternative splicing</keyword>
<keyword id="KW-0040">ANK repeat</keyword>
<keyword id="KW-0131">Cell cycle</keyword>
<keyword id="KW-0963">Cytoplasm</keyword>
<keyword id="KW-0225">Disease variant</keyword>
<keyword id="KW-0435">Li-Fraumeni syndrome</keyword>
<keyword id="KW-0539">Nucleus</keyword>
<keyword id="KW-0597">Phosphoprotein</keyword>
<keyword id="KW-1267">Proteomics identification</keyword>
<keyword id="KW-1185">Reference proteome</keyword>
<keyword id="KW-0677">Repeat</keyword>
<keyword id="KW-0043">Tumor suppressor</keyword>
<sequence length="156" mass="16533">MEPAAGSSMEPSADWLATAAARGRVEEVRALLEAGALPNAPNSYGRRPIQVMMMGSARVAELLLLHGAEPNCADPATLTRPVHDAAREGFLDTLVVLHRAGARLDVRDAWGRLPVDLAEELGHRDVARYLRAAAGGTRGSNHARIDAAEGPSDIPD</sequence>
<evidence type="ECO:0000269" key="1">
    <source>
    </source>
</evidence>
<evidence type="ECO:0000269" key="2">
    <source>
    </source>
</evidence>
<evidence type="ECO:0000269" key="3">
    <source>
    </source>
</evidence>
<evidence type="ECO:0000269" key="4">
    <source>
    </source>
</evidence>
<evidence type="ECO:0000269" key="5">
    <source>
    </source>
</evidence>
<evidence type="ECO:0000269" key="6">
    <source>
    </source>
</evidence>
<evidence type="ECO:0000269" key="7">
    <source>
    </source>
</evidence>
<evidence type="ECO:0000269" key="8">
    <source>
    </source>
</evidence>
<evidence type="ECO:0000269" key="9">
    <source>
    </source>
</evidence>
<evidence type="ECO:0000269" key="10">
    <source>
    </source>
</evidence>
<evidence type="ECO:0000269" key="11">
    <source>
    </source>
</evidence>
<evidence type="ECO:0000269" key="12">
    <source>
    </source>
</evidence>
<evidence type="ECO:0000269" key="13">
    <source>
    </source>
</evidence>
<evidence type="ECO:0000269" key="14">
    <source>
    </source>
</evidence>
<evidence type="ECO:0000269" key="15">
    <source>
    </source>
</evidence>
<evidence type="ECO:0000269" key="16">
    <source>
    </source>
</evidence>
<evidence type="ECO:0000269" key="17">
    <source>
    </source>
</evidence>
<evidence type="ECO:0000269" key="18">
    <source>
    </source>
</evidence>
<evidence type="ECO:0000269" key="19">
    <source>
    </source>
</evidence>
<evidence type="ECO:0000269" key="20">
    <source>
    </source>
</evidence>
<evidence type="ECO:0000269" key="21">
    <source>
    </source>
</evidence>
<evidence type="ECO:0000269" key="22">
    <source>
    </source>
</evidence>
<evidence type="ECO:0000303" key="23">
    <source>
    </source>
</evidence>
<evidence type="ECO:0000303" key="24">
    <source>
    </source>
</evidence>
<evidence type="ECO:0000305" key="25"/>
<evidence type="ECO:0000312" key="26">
    <source>
        <dbReference type="HGNC" id="HGNC:1787"/>
    </source>
</evidence>
<evidence type="ECO:0007744" key="27">
    <source>
    </source>
</evidence>
<evidence type="ECO:0007744" key="28">
    <source>
    </source>
</evidence>
<evidence type="ECO:0007829" key="29">
    <source>
        <dbReference type="PDB" id="1A5E"/>
    </source>
</evidence>
<evidence type="ECO:0007829" key="30">
    <source>
        <dbReference type="PDB" id="1BI7"/>
    </source>
</evidence>
<evidence type="ECO:0007829" key="31">
    <source>
        <dbReference type="PDB" id="1DC2"/>
    </source>
</evidence>
<evidence type="ECO:0007829" key="32">
    <source>
        <dbReference type="PDB" id="2A5E"/>
    </source>
</evidence>
<protein>
    <recommendedName>
        <fullName evidence="26">Cyclin-dependent kinase inhibitor 2A</fullName>
    </recommendedName>
    <alternativeName>
        <fullName>Cyclin-dependent kinase 4 inhibitor A</fullName>
        <shortName>CDK4I</shortName>
    </alternativeName>
    <alternativeName>
        <fullName>Multiple tumor suppressor 1</fullName>
        <shortName>MTS-1</shortName>
    </alternativeName>
    <alternativeName>
        <fullName>p16-INK4a</fullName>
        <shortName>p16-INK4</shortName>
        <shortName>p16INK4A</shortName>
    </alternativeName>
</protein>
<dbReference type="EMBL" id="L27211">
    <property type="protein sequence ID" value="AAA92554.1"/>
    <property type="molecule type" value="mRNA"/>
</dbReference>
<dbReference type="EMBL" id="AF115544">
    <property type="protein sequence ID" value="AAD11437.1"/>
    <property type="molecule type" value="mRNA"/>
</dbReference>
<dbReference type="EMBL" id="AB060808">
    <property type="protein sequence ID" value="BAB91133.1"/>
    <property type="molecule type" value="Genomic_DNA"/>
</dbReference>
<dbReference type="EMBL" id="AF527803">
    <property type="protein sequence ID" value="AAR05391.1"/>
    <property type="molecule type" value="Genomic_DNA"/>
</dbReference>
<dbReference type="EMBL" id="DQ318021">
    <property type="protein sequence ID" value="ABC47036.1"/>
    <property type="molecule type" value="mRNA"/>
</dbReference>
<dbReference type="EMBL" id="AL449423">
    <property type="status" value="NOT_ANNOTATED_CDS"/>
    <property type="molecule type" value="Genomic_DNA"/>
</dbReference>
<dbReference type="EMBL" id="CH471071">
    <property type="protein sequence ID" value="EAW58598.1"/>
    <property type="molecule type" value="Genomic_DNA"/>
</dbReference>
<dbReference type="EMBL" id="CH471071">
    <property type="protein sequence ID" value="EAW58599.1"/>
    <property type="molecule type" value="Genomic_DNA"/>
</dbReference>
<dbReference type="EMBL" id="CH471071">
    <property type="protein sequence ID" value="EAW58603.1"/>
    <property type="molecule type" value="Genomic_DNA"/>
</dbReference>
<dbReference type="EMBL" id="X94154">
    <property type="protein sequence ID" value="CAA63870.1"/>
    <property type="molecule type" value="Genomic_DNA"/>
</dbReference>
<dbReference type="EMBL" id="AH007355">
    <property type="protein sequence ID" value="AAD14050.1"/>
    <property type="molecule type" value="Genomic_DNA"/>
</dbReference>
<dbReference type="EMBL" id="S69804">
    <property type="protein sequence ID" value="AAD14048.1"/>
    <property type="molecule type" value="Genomic_DNA"/>
</dbReference>
<dbReference type="EMBL" id="U12820">
    <property type="protein sequence ID" value="AAB60645.1"/>
    <property type="status" value="ALT_INIT"/>
    <property type="molecule type" value="Genomic_DNA"/>
</dbReference>
<dbReference type="EMBL" id="U12818">
    <property type="protein sequence ID" value="AAB60645.1"/>
    <property type="status" value="JOINED"/>
    <property type="molecule type" value="Genomic_DNA"/>
</dbReference>
<dbReference type="EMBL" id="U12819">
    <property type="protein sequence ID" value="AAB60645.1"/>
    <property type="status" value="JOINED"/>
    <property type="molecule type" value="Genomic_DNA"/>
</dbReference>
<dbReference type="CCDS" id="CCDS56565.1">
    <molecule id="P42771-4"/>
</dbReference>
<dbReference type="CCDS" id="CCDS6510.1">
    <molecule id="P42771-1"/>
</dbReference>
<dbReference type="CCDS" id="CCDS87644.1">
    <molecule id="P42771-2"/>
</dbReference>
<dbReference type="PIR" id="JE0141">
    <property type="entry name" value="JE0141"/>
</dbReference>
<dbReference type="RefSeq" id="NP_000068.1">
    <molecule id="P42771-1"/>
    <property type="nucleotide sequence ID" value="NM_000077.5"/>
</dbReference>
<dbReference type="RefSeq" id="NP_001182061.1">
    <molecule id="P42771-4"/>
    <property type="nucleotide sequence ID" value="NM_001195132.2"/>
</dbReference>
<dbReference type="RefSeq" id="NP_001350692.1">
    <molecule id="P42771-2"/>
    <property type="nucleotide sequence ID" value="NM_001363763.2"/>
</dbReference>
<dbReference type="RefSeq" id="NP_478104.2">
    <molecule id="P42771-3"/>
    <property type="nucleotide sequence ID" value="NM_058197.5"/>
</dbReference>
<dbReference type="RefSeq" id="XP_005251400.1">
    <property type="nucleotide sequence ID" value="XM_005251343.1"/>
</dbReference>
<dbReference type="RefSeq" id="XP_011515981.1">
    <property type="nucleotide sequence ID" value="XM_011517679.1"/>
</dbReference>
<dbReference type="RefSeq" id="XP_047278553.1">
    <molecule id="P42771-2"/>
    <property type="nucleotide sequence ID" value="XM_047422597.1"/>
</dbReference>
<dbReference type="RefSeq" id="XP_054217678.1">
    <molecule id="P42771-2"/>
    <property type="nucleotide sequence ID" value="XM_054361703.1"/>
</dbReference>
<dbReference type="PDB" id="1A5E">
    <property type="method" value="NMR"/>
    <property type="chains" value="A=1-156"/>
</dbReference>
<dbReference type="PDB" id="1BI7">
    <property type="method" value="X-ray"/>
    <property type="resolution" value="3.40 A"/>
    <property type="chains" value="B=1-156"/>
</dbReference>
<dbReference type="PDB" id="1DC2">
    <property type="method" value="NMR"/>
    <property type="chains" value="A=1-156"/>
</dbReference>
<dbReference type="PDB" id="2A5E">
    <property type="method" value="NMR"/>
    <property type="chains" value="A=1-156"/>
</dbReference>
<dbReference type="PDB" id="7OZT">
    <property type="method" value="X-ray"/>
    <property type="resolution" value="1.74 A"/>
    <property type="chains" value="BBB=1-156"/>
</dbReference>
<dbReference type="PDBsum" id="1A5E"/>
<dbReference type="PDBsum" id="1BI7"/>
<dbReference type="PDBsum" id="1DC2"/>
<dbReference type="PDBsum" id="2A5E"/>
<dbReference type="PDBsum" id="7OZT"/>
<dbReference type="BMRB" id="P42771"/>
<dbReference type="SMR" id="P42771"/>
<dbReference type="BioGRID" id="107463">
    <property type="interactions" value="340"/>
</dbReference>
<dbReference type="CORUM" id="P42771"/>
<dbReference type="DIP" id="DIP-6108N"/>
<dbReference type="FunCoup" id="P42771">
    <property type="interactions" value="1413"/>
</dbReference>
<dbReference type="IntAct" id="P42771">
    <property type="interactions" value="118"/>
</dbReference>
<dbReference type="MINT" id="P42771"/>
<dbReference type="STRING" id="9606.ENSP00000418915"/>
<dbReference type="ChEMBL" id="CHEMBL4680027"/>
<dbReference type="GlyGen" id="P42771">
    <property type="glycosylation" value="1 site, 1 O-linked glycan (1 site)"/>
</dbReference>
<dbReference type="iPTMnet" id="P42771"/>
<dbReference type="PhosphoSitePlus" id="P42771"/>
<dbReference type="BioMuta" id="CDKN2A"/>
<dbReference type="DMDM" id="3041660"/>
<dbReference type="CPTAC" id="CPTAC-333"/>
<dbReference type="CPTAC" id="CPTAC-334"/>
<dbReference type="jPOST" id="P42771"/>
<dbReference type="MassIVE" id="P42771"/>
<dbReference type="PaxDb" id="9606-ENSP00000418915"/>
<dbReference type="PeptideAtlas" id="P42771"/>
<dbReference type="ProteomicsDB" id="33740"/>
<dbReference type="ProteomicsDB" id="55551">
    <molecule id="P42771-1"/>
</dbReference>
<dbReference type="ProteomicsDB" id="55552">
    <molecule id="P42771-2"/>
</dbReference>
<dbReference type="ProteomicsDB" id="55553">
    <molecule id="P42771-3"/>
</dbReference>
<dbReference type="ProteomicsDB" id="55554">
    <molecule id="P42771-4"/>
</dbReference>
<dbReference type="Pumba" id="P42771"/>
<dbReference type="TopDownProteomics" id="P42771-1">
    <molecule id="P42771-1"/>
</dbReference>
<dbReference type="ABCD" id="P42771">
    <property type="antibodies" value="8 sequenced antibodies"/>
</dbReference>
<dbReference type="Antibodypedia" id="3608">
    <property type="antibodies" value="1716 antibodies from 55 providers"/>
</dbReference>
<dbReference type="DNASU" id="1029"/>
<dbReference type="Ensembl" id="ENST00000304494.10">
    <molecule id="P42771-1"/>
    <property type="protein sequence ID" value="ENSP00000307101.5"/>
    <property type="gene ID" value="ENSG00000147889.18"/>
</dbReference>
<dbReference type="Ensembl" id="ENST00000380151.3">
    <molecule id="P42771-3"/>
    <property type="protein sequence ID" value="ENSP00000369496.3"/>
    <property type="gene ID" value="ENSG00000147889.18"/>
</dbReference>
<dbReference type="Ensembl" id="ENST00000494262.5">
    <molecule id="P42771-2"/>
    <property type="protein sequence ID" value="ENSP00000464952.1"/>
    <property type="gene ID" value="ENSG00000147889.18"/>
</dbReference>
<dbReference type="Ensembl" id="ENST00000498124.1">
    <molecule id="P42771-4"/>
    <property type="protein sequence ID" value="ENSP00000418915.1"/>
    <property type="gene ID" value="ENSG00000147889.18"/>
</dbReference>
<dbReference type="Ensembl" id="ENST00000498628.6">
    <molecule id="P42771-2"/>
    <property type="protein sequence ID" value="ENSP00000467857.1"/>
    <property type="gene ID" value="ENSG00000147889.18"/>
</dbReference>
<dbReference type="Ensembl" id="ENST00000578845.2">
    <molecule id="P42771-2"/>
    <property type="protein sequence ID" value="ENSP00000467390.1"/>
    <property type="gene ID" value="ENSG00000147889.18"/>
</dbReference>
<dbReference type="GeneID" id="1029"/>
<dbReference type="KEGG" id="hsa:1029"/>
<dbReference type="MANE-Select" id="ENST00000304494.10">
    <property type="protein sequence ID" value="ENSP00000307101.5"/>
    <property type="RefSeq nucleotide sequence ID" value="NM_000077.5"/>
    <property type="RefSeq protein sequence ID" value="NP_000068.1"/>
</dbReference>
<dbReference type="UCSC" id="uc003zpj.4">
    <property type="organism name" value="human"/>
</dbReference>
<dbReference type="UCSC" id="uc003zpk.4">
    <molecule id="P42771-1"/>
    <property type="organism name" value="human"/>
</dbReference>
<dbReference type="AGR" id="HGNC:1787"/>
<dbReference type="CTD" id="1029"/>
<dbReference type="DisGeNET" id="1029"/>
<dbReference type="GeneCards" id="CDKN2A"/>
<dbReference type="HGNC" id="HGNC:1787">
    <property type="gene designation" value="CDKN2A"/>
</dbReference>
<dbReference type="HPA" id="ENSG00000147889">
    <property type="expression patterns" value="Tissue enhanced (choroid plexus, pituitary gland)"/>
</dbReference>
<dbReference type="MalaCards" id="CDKN2A"/>
<dbReference type="MIM" id="155601">
    <property type="type" value="phenotype"/>
</dbReference>
<dbReference type="MIM" id="155755">
    <property type="type" value="phenotype"/>
</dbReference>
<dbReference type="MIM" id="600160">
    <property type="type" value="gene"/>
</dbReference>
<dbReference type="MIM" id="606719">
    <property type="type" value="phenotype"/>
</dbReference>
<dbReference type="neXtProt" id="NX_P42771"/>
<dbReference type="OpenTargets" id="ENSG00000147889"/>
<dbReference type="Orphanet" id="1501">
    <property type="disease" value="Adrenocortical carcinoma"/>
</dbReference>
<dbReference type="Orphanet" id="585909">
    <property type="disease" value="B-lymphoblastic leukemia/lymphoma with t(9;22)(q34.1;q11.2)"/>
</dbReference>
<dbReference type="Orphanet" id="404560">
    <property type="disease" value="Familial atypical multiple mole melanoma syndrome"/>
</dbReference>
<dbReference type="Orphanet" id="618">
    <property type="disease" value="Familial melanoma"/>
</dbReference>
<dbReference type="Orphanet" id="1333">
    <property type="disease" value="Familial pancreatic carcinoma"/>
</dbReference>
<dbReference type="Orphanet" id="524">
    <property type="disease" value="Li-Fraumeni syndrome"/>
</dbReference>
<dbReference type="Orphanet" id="252206">
    <property type="disease" value="Melanoma and neural system tumor syndrome"/>
</dbReference>
<dbReference type="Orphanet" id="99861">
    <property type="disease" value="Precursor T-cell acute lymphoblastic leukemia"/>
</dbReference>
<dbReference type="PharmGKB" id="PA106"/>
<dbReference type="VEuPathDB" id="HostDB:ENSG00000147889"/>
<dbReference type="eggNOG" id="KOG0504">
    <property type="taxonomic scope" value="Eukaryota"/>
</dbReference>
<dbReference type="GeneTree" id="ENSGT00940000163078"/>
<dbReference type="HOGENOM" id="CLU_2229116_0_0_1"/>
<dbReference type="InParanoid" id="P42771"/>
<dbReference type="OMA" id="PNRYGRS"/>
<dbReference type="OrthoDB" id="539213at2759"/>
<dbReference type="PAN-GO" id="P42771">
    <property type="GO annotations" value="7 GO annotations based on evolutionary models"/>
</dbReference>
<dbReference type="TreeFam" id="TF352389"/>
<dbReference type="PathwayCommons" id="P42771"/>
<dbReference type="Reactome" id="R-HSA-2559580">
    <property type="pathway name" value="Oxidative Stress Induced Senescence"/>
</dbReference>
<dbReference type="Reactome" id="R-HSA-2559582">
    <property type="pathway name" value="Senescence-Associated Secretory Phenotype (SASP)"/>
</dbReference>
<dbReference type="Reactome" id="R-HSA-2559585">
    <property type="pathway name" value="Oncogene Induced Senescence"/>
</dbReference>
<dbReference type="Reactome" id="R-HSA-69231">
    <property type="pathway name" value="Cyclin D associated events in G1"/>
</dbReference>
<dbReference type="Reactome" id="R-HSA-8853884">
    <property type="pathway name" value="Transcriptional Regulation by VENTX"/>
</dbReference>
<dbReference type="Reactome" id="R-HSA-9630791">
    <property type="pathway name" value="Evasion of Oncogene Induced Senescence Due to Defective p16INK4A binding to CDK4"/>
</dbReference>
<dbReference type="Reactome" id="R-HSA-9630794">
    <property type="pathway name" value="Evasion of Oncogene Induced Senescence Due to Defective p16INK4A binding to CDK4 and CDK6"/>
</dbReference>
<dbReference type="Reactome" id="R-HSA-9632697">
    <property type="pathway name" value="Evasion of Oxidative Stress Induced Senescence Due to Defective p16INK4A binding to CDK4"/>
</dbReference>
<dbReference type="Reactome" id="R-HSA-9632700">
    <property type="pathway name" value="Evasion of Oxidative Stress Induced Senescence Due to Defective p16INK4A binding to CDK4 and CDK6"/>
</dbReference>
<dbReference type="Reactome" id="R-HSA-9825892">
    <property type="pathway name" value="Regulation of MITF-M-dependent genes involved in cell cycle and proliferation"/>
</dbReference>
<dbReference type="SignaLink" id="P42771"/>
<dbReference type="SIGNOR" id="P42771"/>
<dbReference type="BioGRID-ORCS" id="1029">
    <property type="hits" value="29 hits in 1179 CRISPR screens"/>
</dbReference>
<dbReference type="CD-CODE" id="91857CE7">
    <property type="entry name" value="Nucleolus"/>
</dbReference>
<dbReference type="ChiTaRS" id="CDKN2A">
    <property type="organism name" value="human"/>
</dbReference>
<dbReference type="EvolutionaryTrace" id="P42771"/>
<dbReference type="GeneWiki" id="P16_(gene)"/>
<dbReference type="GenomeRNAi" id="1029"/>
<dbReference type="Pharos" id="P42771">
    <property type="development level" value="Tbio"/>
</dbReference>
<dbReference type="Proteomes" id="UP000005640">
    <property type="component" value="Chromosome 9"/>
</dbReference>
<dbReference type="RNAct" id="P42771">
    <property type="molecule type" value="protein"/>
</dbReference>
<dbReference type="Bgee" id="ENSG00000147889">
    <property type="expression patterns" value="Expressed in parotid gland and 174 other cell types or tissues"/>
</dbReference>
<dbReference type="ExpressionAtlas" id="P42771">
    <property type="expression patterns" value="baseline and differential"/>
</dbReference>
<dbReference type="GO" id="GO:0005737">
    <property type="term" value="C:cytoplasm"/>
    <property type="evidence" value="ECO:0000314"/>
    <property type="project" value="HGNC-UCL"/>
</dbReference>
<dbReference type="GO" id="GO:0005829">
    <property type="term" value="C:cytosol"/>
    <property type="evidence" value="ECO:0000304"/>
    <property type="project" value="Reactome"/>
</dbReference>
<dbReference type="GO" id="GO:0005730">
    <property type="term" value="C:nucleolus"/>
    <property type="evidence" value="ECO:0007669"/>
    <property type="project" value="Ensembl"/>
</dbReference>
<dbReference type="GO" id="GO:0005634">
    <property type="term" value="C:nucleus"/>
    <property type="evidence" value="ECO:0000314"/>
    <property type="project" value="HGNC-UCL"/>
</dbReference>
<dbReference type="GO" id="GO:0035985">
    <property type="term" value="C:senescence-associated heterochromatin focus"/>
    <property type="evidence" value="ECO:0000314"/>
    <property type="project" value="UniProtKB"/>
</dbReference>
<dbReference type="GO" id="GO:0004861">
    <property type="term" value="F:cyclin-dependent protein serine/threonine kinase inhibitor activity"/>
    <property type="evidence" value="ECO:0000314"/>
    <property type="project" value="MGI"/>
</dbReference>
<dbReference type="GO" id="GO:0051059">
    <property type="term" value="F:NF-kappaB binding"/>
    <property type="evidence" value="ECO:0000353"/>
    <property type="project" value="BHF-UCL"/>
</dbReference>
<dbReference type="GO" id="GO:0019901">
    <property type="term" value="F:protein kinase binding"/>
    <property type="evidence" value="ECO:0000353"/>
    <property type="project" value="BHF-UCL"/>
</dbReference>
<dbReference type="GO" id="GO:0003723">
    <property type="term" value="F:RNA binding"/>
    <property type="evidence" value="ECO:0007005"/>
    <property type="project" value="UniProtKB"/>
</dbReference>
<dbReference type="GO" id="GO:0060057">
    <property type="term" value="P:apoptotic process involved in mammary gland involution"/>
    <property type="evidence" value="ECO:0007669"/>
    <property type="project" value="Ensembl"/>
</dbReference>
<dbReference type="GO" id="GO:0070301">
    <property type="term" value="P:cellular response to hydrogen peroxide"/>
    <property type="evidence" value="ECO:0007669"/>
    <property type="project" value="Ensembl"/>
</dbReference>
<dbReference type="GO" id="GO:0090398">
    <property type="term" value="P:cellular senescence"/>
    <property type="evidence" value="ECO:0000315"/>
    <property type="project" value="BHF-UCL"/>
</dbReference>
<dbReference type="GO" id="GO:0042593">
    <property type="term" value="P:glucose homeostasis"/>
    <property type="evidence" value="ECO:0007669"/>
    <property type="project" value="Ensembl"/>
</dbReference>
<dbReference type="GO" id="GO:0030216">
    <property type="term" value="P:keratinocyte differentiation"/>
    <property type="evidence" value="ECO:0007669"/>
    <property type="project" value="Ensembl"/>
</dbReference>
<dbReference type="GO" id="GO:0043616">
    <property type="term" value="P:keratinocyte proliferation"/>
    <property type="evidence" value="ECO:0007669"/>
    <property type="project" value="Ensembl"/>
</dbReference>
<dbReference type="GO" id="GO:0033598">
    <property type="term" value="P:mammary gland epithelial cell proliferation"/>
    <property type="evidence" value="ECO:0007669"/>
    <property type="project" value="Ensembl"/>
</dbReference>
<dbReference type="GO" id="GO:0030308">
    <property type="term" value="P:negative regulation of cell growth"/>
    <property type="evidence" value="ECO:0000314"/>
    <property type="project" value="BHF-UCL"/>
</dbReference>
<dbReference type="GO" id="GO:0008285">
    <property type="term" value="P:negative regulation of cell population proliferation"/>
    <property type="evidence" value="ECO:0000314"/>
    <property type="project" value="BHF-UCL"/>
</dbReference>
<dbReference type="GO" id="GO:0001953">
    <property type="term" value="P:negative regulation of cell-matrix adhesion"/>
    <property type="evidence" value="ECO:0000315"/>
    <property type="project" value="BHF-UCL"/>
</dbReference>
<dbReference type="GO" id="GO:0045736">
    <property type="term" value="P:negative regulation of cyclin-dependent protein serine/threonine kinase activity"/>
    <property type="evidence" value="ECO:0000314"/>
    <property type="project" value="MGI"/>
</dbReference>
<dbReference type="GO" id="GO:0045892">
    <property type="term" value="P:negative regulation of DNA-templated transcription"/>
    <property type="evidence" value="ECO:0000315"/>
    <property type="project" value="UniProtKB"/>
</dbReference>
<dbReference type="GO" id="GO:0033600">
    <property type="term" value="P:negative regulation of mammary gland epithelial cell proliferation"/>
    <property type="evidence" value="ECO:0007669"/>
    <property type="project" value="Ensembl"/>
</dbReference>
<dbReference type="GO" id="GO:0000122">
    <property type="term" value="P:negative regulation of transcription by RNA polymerase II"/>
    <property type="evidence" value="ECO:0000314"/>
    <property type="project" value="BHF-UCL"/>
</dbReference>
<dbReference type="GO" id="GO:2000059">
    <property type="term" value="P:negative regulation of ubiquitin-dependent protein catabolic process"/>
    <property type="evidence" value="ECO:0007669"/>
    <property type="project" value="Ensembl"/>
</dbReference>
<dbReference type="GO" id="GO:0090402">
    <property type="term" value="P:oncogene-induced cell senescence"/>
    <property type="evidence" value="ECO:0007669"/>
    <property type="project" value="Ensembl"/>
</dbReference>
<dbReference type="GO" id="GO:0060058">
    <property type="term" value="P:positive regulation of apoptotic process involved in mammary gland involution"/>
    <property type="evidence" value="ECO:0007669"/>
    <property type="project" value="Ensembl"/>
</dbReference>
<dbReference type="GO" id="GO:2000111">
    <property type="term" value="P:positive regulation of macrophage apoptotic process"/>
    <property type="evidence" value="ECO:0000250"/>
    <property type="project" value="BHF-UCL"/>
</dbReference>
<dbReference type="GO" id="GO:0034393">
    <property type="term" value="P:positive regulation of smooth muscle cell apoptotic process"/>
    <property type="evidence" value="ECO:0000250"/>
    <property type="project" value="BHF-UCL"/>
</dbReference>
<dbReference type="GO" id="GO:0007265">
    <property type="term" value="P:Ras protein signal transduction"/>
    <property type="evidence" value="ECO:0000270"/>
    <property type="project" value="BHF-UCL"/>
</dbReference>
<dbReference type="GO" id="GO:0051726">
    <property type="term" value="P:regulation of cell cycle"/>
    <property type="evidence" value="ECO:0000314"/>
    <property type="project" value="BHF-UCL"/>
</dbReference>
<dbReference type="GO" id="GO:2000045">
    <property type="term" value="P:regulation of G1/S transition of mitotic cell cycle"/>
    <property type="evidence" value="ECO:0000314"/>
    <property type="project" value="BHF-UCL"/>
</dbReference>
<dbReference type="GO" id="GO:0046822">
    <property type="term" value="P:regulation of nucleocytoplasmic transport"/>
    <property type="evidence" value="ECO:0007669"/>
    <property type="project" value="Ensembl"/>
</dbReference>
<dbReference type="GO" id="GO:0090399">
    <property type="term" value="P:replicative senescence"/>
    <property type="evidence" value="ECO:0000315"/>
    <property type="project" value="BHF-UCL"/>
</dbReference>
<dbReference type="GO" id="GO:0009303">
    <property type="term" value="P:rRNA transcription"/>
    <property type="evidence" value="ECO:0007669"/>
    <property type="project" value="Ensembl"/>
</dbReference>
<dbReference type="GO" id="GO:0035019">
    <property type="term" value="P:somatic stem cell population maintenance"/>
    <property type="evidence" value="ECO:0007669"/>
    <property type="project" value="Ensembl"/>
</dbReference>
<dbReference type="FunFam" id="1.25.40.20:FF:000107">
    <property type="entry name" value="cyclin-dependent kinase 4 inhibitor B"/>
    <property type="match status" value="1"/>
</dbReference>
<dbReference type="Gene3D" id="1.25.40.20">
    <property type="entry name" value="Ankyrin repeat-containing domain"/>
    <property type="match status" value="1"/>
</dbReference>
<dbReference type="InterPro" id="IPR050776">
    <property type="entry name" value="Ank_Repeat/CDKN_Inhibitor"/>
</dbReference>
<dbReference type="InterPro" id="IPR036770">
    <property type="entry name" value="Ankyrin_rpt-contain_sf"/>
</dbReference>
<dbReference type="PANTHER" id="PTHR24201">
    <property type="entry name" value="ANK_REP_REGION DOMAIN-CONTAINING PROTEIN"/>
    <property type="match status" value="1"/>
</dbReference>
<dbReference type="PANTHER" id="PTHR24201:SF4">
    <property type="entry name" value="CYCLIN-DEPENDENT KINASE INHIBITOR 2A"/>
    <property type="match status" value="1"/>
</dbReference>
<dbReference type="SUPFAM" id="SSF48403">
    <property type="entry name" value="Ankyrin repeat"/>
    <property type="match status" value="1"/>
</dbReference>
<dbReference type="PROSITE" id="PS50297">
    <property type="entry name" value="ANK_REP_REGION"/>
    <property type="match status" value="1"/>
</dbReference>